<dbReference type="EC" id="3.4.19.12" evidence="1"/>
<dbReference type="EC" id="3.4.22.-" evidence="1"/>
<dbReference type="EMBL" id="U43400">
    <property type="protein sequence ID" value="AAC54693.1"/>
    <property type="molecule type" value="Genomic_DNA"/>
</dbReference>
<dbReference type="PIR" id="T41933">
    <property type="entry name" value="T41933"/>
</dbReference>
<dbReference type="SMR" id="P52362"/>
<dbReference type="Proteomes" id="UP000009246">
    <property type="component" value="Segment"/>
</dbReference>
<dbReference type="GO" id="GO:0030430">
    <property type="term" value="C:host cell cytoplasm"/>
    <property type="evidence" value="ECO:0007669"/>
    <property type="project" value="UniProtKB-SubCell"/>
</dbReference>
<dbReference type="GO" id="GO:0042025">
    <property type="term" value="C:host cell nucleus"/>
    <property type="evidence" value="ECO:0007669"/>
    <property type="project" value="UniProtKB-SubCell"/>
</dbReference>
<dbReference type="GO" id="GO:0019033">
    <property type="term" value="C:viral tegument"/>
    <property type="evidence" value="ECO:0007669"/>
    <property type="project" value="UniProtKB-SubCell"/>
</dbReference>
<dbReference type="GO" id="GO:0004843">
    <property type="term" value="F:cysteine-type deubiquitinase activity"/>
    <property type="evidence" value="ECO:0007669"/>
    <property type="project" value="UniProtKB-EC"/>
</dbReference>
<dbReference type="GO" id="GO:0006508">
    <property type="term" value="P:proteolysis"/>
    <property type="evidence" value="ECO:0007669"/>
    <property type="project" value="UniProtKB-KW"/>
</dbReference>
<dbReference type="GO" id="GO:0039648">
    <property type="term" value="P:symbiont-mediated perturbation of host ubiquitin-like protein modification"/>
    <property type="evidence" value="ECO:0007669"/>
    <property type="project" value="UniProtKB-KW"/>
</dbReference>
<dbReference type="Gene3D" id="3.90.70.120">
    <property type="match status" value="1"/>
</dbReference>
<dbReference type="InterPro" id="IPR006928">
    <property type="entry name" value="Herpes_teg_USP"/>
</dbReference>
<dbReference type="InterPro" id="IPR038765">
    <property type="entry name" value="Papain-like_cys_pep_sf"/>
</dbReference>
<dbReference type="Pfam" id="PF04843">
    <property type="entry name" value="Herpes_teg_N"/>
    <property type="match status" value="1"/>
</dbReference>
<dbReference type="SUPFAM" id="SSF54001">
    <property type="entry name" value="Cysteine proteinases"/>
    <property type="match status" value="1"/>
</dbReference>
<dbReference type="PROSITE" id="PS51521">
    <property type="entry name" value="HTUSP"/>
    <property type="match status" value="1"/>
</dbReference>
<organism>
    <name type="scientific">Human herpesvirus 7 (strain JI)</name>
    <name type="common">HHV-7</name>
    <name type="synonym">Human T lymphotropic virus</name>
    <dbReference type="NCBI Taxonomy" id="57278"/>
    <lineage>
        <taxon>Viruses</taxon>
        <taxon>Duplodnaviria</taxon>
        <taxon>Heunggongvirae</taxon>
        <taxon>Peploviricota</taxon>
        <taxon>Herviviricetes</taxon>
        <taxon>Herpesvirales</taxon>
        <taxon>Orthoherpesviridae</taxon>
        <taxon>Betaherpesvirinae</taxon>
        <taxon>Roseolovirus</taxon>
        <taxon>Roseolovirus humanbeta7</taxon>
        <taxon>Human betaherpesvirus 7</taxon>
    </lineage>
</organism>
<comment type="function">
    <text evidence="1">Large tegument protein that plays multiple roles in the viral cycle. During viral entry, remains associated with the capsid while most of the tegument is detached and participates in the capsid transport toward the host nucleus. Plays a role in the routing of the capsid at the nuclear pore complex and subsequent uncoating. Within the host nucleus, acts as a deneddylase and promotes the degradation of nuclear CRLs (cullin-RING ubiquitin ligases) and thereby stabilizes nuclear CRL substrates, while cytoplasmic CRLs remain unaffected. These modifications prevent host cell cycle S-phase progression and create a favorable environment allowing efficient viral genome replication. Participates later in the secondary envelopment of capsids. Indeed, plays a linker role for the association of the outer viral tegument to the capsids together with the inner tegument protein.</text>
</comment>
<comment type="catalytic activity">
    <reaction evidence="1">
        <text>Thiol-dependent hydrolysis of ester, thioester, amide, peptide and isopeptide bonds formed by the C-terminal Gly of ubiquitin (a 76-residue protein attached to proteins as an intracellular targeting signal).</text>
        <dbReference type="EC" id="3.4.19.12"/>
    </reaction>
</comment>
<comment type="subunit">
    <text evidence="1">Interacts with host CUL1 and CUL4A; these interactions inhibit the E3 ligase activity of cullins. Interacts with inner tegument protein. Interacts with capsid vertex specific component CVC2. Interacts with the major capsid protein/MCP.</text>
</comment>
<comment type="subcellular location">
    <subcellularLocation>
        <location evidence="1">Virion tegument</location>
    </subcellularLocation>
    <subcellularLocation>
        <location evidence="1">Host cytoplasm</location>
    </subcellularLocation>
    <subcellularLocation>
        <location evidence="1">Host nucleus</location>
    </subcellularLocation>
    <text evidence="1">Tightly associated with the capsid.</text>
</comment>
<comment type="similarity">
    <text evidence="1">Belongs to the herpesviridae large tegument protein family.</text>
</comment>
<reference key="1">
    <citation type="journal article" date="1996" name="J. Virol.">
        <title>Determination and analysis of the complete nucleotide sequence of human herpesvirus.</title>
        <authorList>
            <person name="Nicholas J."/>
        </authorList>
    </citation>
    <scope>NUCLEOTIDE SEQUENCE [LARGE SCALE GENOMIC DNA]</scope>
</reference>
<keyword id="KW-1035">Host cytoplasm</keyword>
<keyword id="KW-1048">Host nucleus</keyword>
<keyword id="KW-0945">Host-virus interaction</keyword>
<keyword id="KW-0378">Hydrolase</keyword>
<keyword id="KW-1127">Modulation of host ubiquitin pathway by viral deubiquitinase</keyword>
<keyword id="KW-1130">Modulation of host ubiquitin pathway by virus</keyword>
<keyword id="KW-0645">Protease</keyword>
<keyword id="KW-1185">Reference proteome</keyword>
<keyword id="KW-0677">Repeat</keyword>
<keyword id="KW-0788">Thiol protease</keyword>
<keyword id="KW-0833">Ubl conjugation pathway</keyword>
<keyword id="KW-0946">Virion</keyword>
<keyword id="KW-0920">Virion tegument</keyword>
<proteinExistence type="inferred from homology"/>
<protein>
    <recommendedName>
        <fullName>Large tegument protein deneddylase</fullName>
        <ecNumber evidence="1">3.4.19.12</ecNumber>
        <ecNumber evidence="1">3.4.22.-</ecNumber>
    </recommendedName>
</protein>
<name>LTP_HHV7J</name>
<organismHost>
    <name type="scientific">Homo sapiens</name>
    <name type="common">Human</name>
    <dbReference type="NCBI Taxonomy" id="9606"/>
</organismHost>
<accession>P52362</accession>
<feature type="chain" id="PRO_0000116042" description="Large tegument protein deneddylase">
    <location>
        <begin position="1"/>
        <end position="2059"/>
    </location>
</feature>
<feature type="domain" description="Peptidase C76" evidence="1">
    <location>
        <begin position="3"/>
        <end position="220"/>
    </location>
</feature>
<feature type="region of interest" description="Deubiquitination activity" evidence="1">
    <location>
        <begin position="1"/>
        <end position="230"/>
    </location>
</feature>
<feature type="region of interest" description="Disordered" evidence="2">
    <location>
        <begin position="245"/>
        <end position="272"/>
    </location>
</feature>
<feature type="region of interest" description="Interaction with inner tegument protein" evidence="1">
    <location>
        <position position="278"/>
    </location>
</feature>
<feature type="active site" evidence="1">
    <location>
        <position position="23"/>
    </location>
</feature>
<feature type="active site" evidence="1">
    <location>
        <position position="155"/>
    </location>
</feature>
<feature type="active site" evidence="1">
    <location>
        <position position="157"/>
    </location>
</feature>
<feature type="site" description="Important for catalytic activity" evidence="1">
    <location>
        <position position="10"/>
    </location>
</feature>
<sequence length="2059" mass="239477">MRIIAGSTNQNDPKYGPRAGKQCMSNCFSFLHTVYLNGINNVLNKESIDIIMENGALLDNISTTTLKLETGNIPEYRFFTEIPKKISSNFGETIHELSRPFNGTLESQHIDNEVYLGLLDFLLYGKNKKPAFIVITIGVMARAIFIVDELFYLFDSHASDTENSAAIYICEDIDELYALLAIENVAEFYYDAVFSYFIETTDLSLEDGDATILILKTYKDPDIALSLNDFLTMYSSTSSTKTAETNTLISKQSPSKRKQEKTSLNSNSLEKKRKQGSSLKYYNNEVDLVPSFYELRPQFNNILFELSNFPIVKENVNWTLYIQKFATKSTQPFTKPFIWNRVFHLFSQVVDALIMIKNDHWDETQQQKQFFTHFLPFKEFSEEFENAIEACRENNLDLILLYKNYLSKTTAFKNLERILLTKFSAIVSPVHEKHYTLVNTWLTNLIQKLVKHPEDTNAFINDYVLKNPLNHFICLNKKEKQSIALLLNKKRMSMLKDVEIEKNGFVQLQAFIENIGEAPANYLDPENARKVNVEEVSEKDIPTLSTDKVSIPNESMFTSNKKHSIEKLIHAKLKAILSTMGQRLTRIIQENYNNIAAGFLPVNDLNNLFAYLVKLYFDVYSITINGFVVENELIKNIEQIYDNTQYLRFGLTRFNMQNLTPFTISVRKMFLDFFLSQKTLIDRAEEIIENLEFKSVTPEGKQKLATKNMLREQLEQLNAMDVDDTINLKTDTLTHQVLFSDQELRMIQDFILQLSIHNIPSINFVKSLKLHIILEKRPDILLALQEKVQNILYFYFQDLVNEIPAQENVLSTMLFIIELFPADSRIHLLETGYISRHIVKKWLNMKSLQDAEDLIRFININKEQLGKFEHQPFGKEIQKLIEKIHLFYKQKVIEYQEDVWSEMAKNIILTSPSELSQFLASAPTQRIIQKHKNNLDQKLLIHMENQAKQAMEDDKKRVACSKINLERHLNDLLLLLKDRQFASIQASVLIVCENIFKTIPDDNLIIQFSHALLSVLLDIEKDLKSYSSEILEKILINRPLETSRLLVFKDAYGNLKEFLNALKQSLFATADVQNKADFLIQILDFTYKFRHKTNKGKLLHSIYNEDFKLYEETLTELRKKATDAKESLTKLFKASEQKIELSRTIPLKEIYLNIETVNFQGYGNVVFRESAFKRAIEVEIKNYEMKLNDLIKHFNSHLKTKIDHIQILNLSFDNKWKDFVSKSKISFPPELTISSQELIKDPIKVITETLNKASNDLAYVISEKILKWLIVFVKELNTFFVATMSEFGEVIPFDYKHFRALEYEINSKYIEIENKIICNEIIENTDNIEKLSTLIKQIDPNRIAGGKQKFQDYLSKILTAETNQQQTRYKEQLKKQYFDLLDNIAHFRFAFDFNHQQNLILKLKDKFKTLRTDTVFERFPNLDDTFVSSMNVENFLQALEALSHFVQAAQNFLQNVLTEQADLFPQTNFIPVELSTVKTIPKSDINLRMKIHTPQTFFQVDSVFNTQLIVDEKGIPVQFYNVFHNIVFKFFALNYKKIIVPDKVLNLVSTKYKILTTLKSILSVVKSFWKEIINFDLTSYFQGKAEFTFQNVFPIINLKIFIYIITQAWSVTSDETQHSFELPLEKFSLLIIANNPEFLFGSLQCPVDLAINSLIPLLEKKKYFTAFTISDNPPKLSMDELKIVCLDLNTWSEITLEKYTFKKNSLMQLCMGKEKFFIYLLSALVLPQNFLNYIWIQYKPSCCAQDSFQQLIQDLCFEYTHQNHIKPISLNLQEPNALKHGERILSKFVLEKNANTSLFSIFLGKQFLLDYLLFSYLTATEMTFSYYVDSIKNFLLTIRHLENVQQNVDFRTILQSRNFDLKYLLTQSWTQNVLEQSIFHVQLDKIIADIKQPQLSLKKIPLVLFNGDNEVVSTYVPPEQASQTEQSFRIKNIFPNPVQEYSSKNVILFTNYPKNTKFLFNSPPPKTAAKSYKLPDTTDDINTETLSSPTIQRIPIKGLVPKENEIVFLPEKNTAHTDSKETKTHLIDTFNILSQTKGEIKTFSTDFDQTISKLKHLYF</sequence>
<evidence type="ECO:0000250" key="1">
    <source>
        <dbReference type="UniProtKB" id="P10220"/>
    </source>
</evidence>
<evidence type="ECO:0000256" key="2">
    <source>
        <dbReference type="SAM" id="MobiDB-lite"/>
    </source>
</evidence>
<gene>
    <name type="primary">U31</name>
</gene>